<dbReference type="EC" id="6.1.1.21"/>
<dbReference type="EMBL" id="AL591688">
    <property type="protein sequence ID" value="CAC45358.1"/>
    <property type="molecule type" value="Genomic_DNA"/>
</dbReference>
<dbReference type="RefSeq" id="NP_384892.1">
    <property type="nucleotide sequence ID" value="NC_003047.1"/>
</dbReference>
<dbReference type="RefSeq" id="WP_010968817.1">
    <property type="nucleotide sequence ID" value="NC_003047.1"/>
</dbReference>
<dbReference type="SMR" id="Q92RR7"/>
<dbReference type="EnsemblBacteria" id="CAC45358">
    <property type="protein sequence ID" value="CAC45358"/>
    <property type="gene ID" value="SMc00919"/>
</dbReference>
<dbReference type="KEGG" id="sme:SMc00919"/>
<dbReference type="PATRIC" id="fig|266834.11.peg.2173"/>
<dbReference type="eggNOG" id="COG0124">
    <property type="taxonomic scope" value="Bacteria"/>
</dbReference>
<dbReference type="HOGENOM" id="CLU_025113_3_2_5"/>
<dbReference type="OrthoDB" id="9800814at2"/>
<dbReference type="Proteomes" id="UP000001976">
    <property type="component" value="Chromosome"/>
</dbReference>
<dbReference type="GO" id="GO:0005737">
    <property type="term" value="C:cytoplasm"/>
    <property type="evidence" value="ECO:0007669"/>
    <property type="project" value="UniProtKB-SubCell"/>
</dbReference>
<dbReference type="GO" id="GO:0005524">
    <property type="term" value="F:ATP binding"/>
    <property type="evidence" value="ECO:0007669"/>
    <property type="project" value="UniProtKB-UniRule"/>
</dbReference>
<dbReference type="GO" id="GO:0004821">
    <property type="term" value="F:histidine-tRNA ligase activity"/>
    <property type="evidence" value="ECO:0007669"/>
    <property type="project" value="UniProtKB-UniRule"/>
</dbReference>
<dbReference type="GO" id="GO:0006427">
    <property type="term" value="P:histidyl-tRNA aminoacylation"/>
    <property type="evidence" value="ECO:0007669"/>
    <property type="project" value="UniProtKB-UniRule"/>
</dbReference>
<dbReference type="CDD" id="cd00773">
    <property type="entry name" value="HisRS-like_core"/>
    <property type="match status" value="1"/>
</dbReference>
<dbReference type="CDD" id="cd00859">
    <property type="entry name" value="HisRS_anticodon"/>
    <property type="match status" value="1"/>
</dbReference>
<dbReference type="Gene3D" id="3.40.50.800">
    <property type="entry name" value="Anticodon-binding domain"/>
    <property type="match status" value="1"/>
</dbReference>
<dbReference type="Gene3D" id="3.30.930.10">
    <property type="entry name" value="Bira Bifunctional Protein, Domain 2"/>
    <property type="match status" value="1"/>
</dbReference>
<dbReference type="HAMAP" id="MF_00127">
    <property type="entry name" value="His_tRNA_synth"/>
    <property type="match status" value="1"/>
</dbReference>
<dbReference type="InterPro" id="IPR006195">
    <property type="entry name" value="aa-tRNA-synth_II"/>
</dbReference>
<dbReference type="InterPro" id="IPR045864">
    <property type="entry name" value="aa-tRNA-synth_II/BPL/LPL"/>
</dbReference>
<dbReference type="InterPro" id="IPR004154">
    <property type="entry name" value="Anticodon-bd"/>
</dbReference>
<dbReference type="InterPro" id="IPR036621">
    <property type="entry name" value="Anticodon-bd_dom_sf"/>
</dbReference>
<dbReference type="InterPro" id="IPR015807">
    <property type="entry name" value="His-tRNA-ligase"/>
</dbReference>
<dbReference type="InterPro" id="IPR041715">
    <property type="entry name" value="HisRS-like_core"/>
</dbReference>
<dbReference type="InterPro" id="IPR004516">
    <property type="entry name" value="HisRS/HisZ"/>
</dbReference>
<dbReference type="InterPro" id="IPR033656">
    <property type="entry name" value="HisRS_anticodon"/>
</dbReference>
<dbReference type="NCBIfam" id="TIGR00442">
    <property type="entry name" value="hisS"/>
    <property type="match status" value="1"/>
</dbReference>
<dbReference type="PANTHER" id="PTHR11476:SF7">
    <property type="entry name" value="HISTIDINE--TRNA LIGASE"/>
    <property type="match status" value="1"/>
</dbReference>
<dbReference type="PANTHER" id="PTHR11476">
    <property type="entry name" value="HISTIDYL-TRNA SYNTHETASE"/>
    <property type="match status" value="1"/>
</dbReference>
<dbReference type="Pfam" id="PF03129">
    <property type="entry name" value="HGTP_anticodon"/>
    <property type="match status" value="1"/>
</dbReference>
<dbReference type="Pfam" id="PF13393">
    <property type="entry name" value="tRNA-synt_His"/>
    <property type="match status" value="1"/>
</dbReference>
<dbReference type="PIRSF" id="PIRSF001549">
    <property type="entry name" value="His-tRNA_synth"/>
    <property type="match status" value="1"/>
</dbReference>
<dbReference type="SUPFAM" id="SSF52954">
    <property type="entry name" value="Class II aaRS ABD-related"/>
    <property type="match status" value="1"/>
</dbReference>
<dbReference type="SUPFAM" id="SSF55681">
    <property type="entry name" value="Class II aaRS and biotin synthetases"/>
    <property type="match status" value="1"/>
</dbReference>
<dbReference type="PROSITE" id="PS50862">
    <property type="entry name" value="AA_TRNA_LIGASE_II"/>
    <property type="match status" value="1"/>
</dbReference>
<comment type="catalytic activity">
    <reaction>
        <text>tRNA(His) + L-histidine + ATP = L-histidyl-tRNA(His) + AMP + diphosphate + H(+)</text>
        <dbReference type="Rhea" id="RHEA:17313"/>
        <dbReference type="Rhea" id="RHEA-COMP:9665"/>
        <dbReference type="Rhea" id="RHEA-COMP:9689"/>
        <dbReference type="ChEBI" id="CHEBI:15378"/>
        <dbReference type="ChEBI" id="CHEBI:30616"/>
        <dbReference type="ChEBI" id="CHEBI:33019"/>
        <dbReference type="ChEBI" id="CHEBI:57595"/>
        <dbReference type="ChEBI" id="CHEBI:78442"/>
        <dbReference type="ChEBI" id="CHEBI:78527"/>
        <dbReference type="ChEBI" id="CHEBI:456215"/>
        <dbReference type="EC" id="6.1.1.21"/>
    </reaction>
</comment>
<comment type="subunit">
    <text evidence="1">Homodimer.</text>
</comment>
<comment type="subcellular location">
    <subcellularLocation>
        <location evidence="1">Cytoplasm</location>
    </subcellularLocation>
</comment>
<comment type="similarity">
    <text evidence="2">Belongs to the class-II aminoacyl-tRNA synthetase family.</text>
</comment>
<proteinExistence type="inferred from homology"/>
<protein>
    <recommendedName>
        <fullName>Histidine--tRNA ligase</fullName>
        <ecNumber>6.1.1.21</ecNumber>
    </recommendedName>
    <alternativeName>
        <fullName>Histidyl-tRNA synthetase</fullName>
        <shortName>HisRS</shortName>
    </alternativeName>
</protein>
<keyword id="KW-0030">Aminoacyl-tRNA synthetase</keyword>
<keyword id="KW-0067">ATP-binding</keyword>
<keyword id="KW-0963">Cytoplasm</keyword>
<keyword id="KW-0436">Ligase</keyword>
<keyword id="KW-0547">Nucleotide-binding</keyword>
<keyword id="KW-0648">Protein biosynthesis</keyword>
<keyword id="KW-1185">Reference proteome</keyword>
<organism>
    <name type="scientific">Rhizobium meliloti (strain 1021)</name>
    <name type="common">Ensifer meliloti</name>
    <name type="synonym">Sinorhizobium meliloti</name>
    <dbReference type="NCBI Taxonomy" id="266834"/>
    <lineage>
        <taxon>Bacteria</taxon>
        <taxon>Pseudomonadati</taxon>
        <taxon>Pseudomonadota</taxon>
        <taxon>Alphaproteobacteria</taxon>
        <taxon>Hyphomicrobiales</taxon>
        <taxon>Rhizobiaceae</taxon>
        <taxon>Sinorhizobium/Ensifer group</taxon>
        <taxon>Sinorhizobium</taxon>
    </lineage>
</organism>
<accession>Q92RR7</accession>
<name>SYH_RHIME</name>
<evidence type="ECO:0000250" key="1"/>
<evidence type="ECO:0000305" key="2"/>
<gene>
    <name type="primary">hisS</name>
    <name type="ordered locus">R00786</name>
    <name type="ORF">SMc00919</name>
</gene>
<feature type="chain" id="PRO_0000136235" description="Histidine--tRNA ligase">
    <location>
        <begin position="1"/>
        <end position="504"/>
    </location>
</feature>
<sequence>MNEKQKKTQKLRARLPRGFVDRSAADIRAVDEMIAKIREVYERYGFDPVETPLFEYTDALGKFLPDSDRPNEGVFSLTDDDDQWLSLRYDLTAPLARHVAENFNEIQLPYRTYRAGYVFRNEKPGPGRFRQFMQFDADTVGAAGVQADAEMCMMMADTMEALGIARGDYVIRVNNRKVLDGVLEAIGLGGVEQTNTRLTVLRAIDKLDKFGPEGVRLLLGEGRKDESGDFTKGAGLNEEQIGKILFFVGITDYARSADELAALVAGTARGAEGVNELNTIRGLVLSAGYEADRIKIDPSVVRGLEYYTGPVFEAELQFAVTNEKGEKVVFGSVGGGGRYDGLVSRFMGQPVPATGFSIGVSRLMTALKNLGKLGAEQVTAPVVVCVMDRDIESMGRYQRFVQDLRHAGIRAEMYQGNKKNFGDQLKYADRRGSPIAVIQGGDERASGVVQIKDLIEGKRLSGEIEDNVAWREARVAQVSVPEGELVAKVRQILAEQAEDRKRAG</sequence>
<reference key="1">
    <citation type="journal article" date="2001" name="Proc. Natl. Acad. Sci. U.S.A.">
        <title>Analysis of the chromosome sequence of the legume symbiont Sinorhizobium meliloti strain 1021.</title>
        <authorList>
            <person name="Capela D."/>
            <person name="Barloy-Hubler F."/>
            <person name="Gouzy J."/>
            <person name="Bothe G."/>
            <person name="Ampe F."/>
            <person name="Batut J."/>
            <person name="Boistard P."/>
            <person name="Becker A."/>
            <person name="Boutry M."/>
            <person name="Cadieu E."/>
            <person name="Dreano S."/>
            <person name="Gloux S."/>
            <person name="Godrie T."/>
            <person name="Goffeau A."/>
            <person name="Kahn D."/>
            <person name="Kiss E."/>
            <person name="Lelaure V."/>
            <person name="Masuy D."/>
            <person name="Pohl T."/>
            <person name="Portetelle D."/>
            <person name="Puehler A."/>
            <person name="Purnelle B."/>
            <person name="Ramsperger U."/>
            <person name="Renard C."/>
            <person name="Thebault P."/>
            <person name="Vandenbol M."/>
            <person name="Weidner S."/>
            <person name="Galibert F."/>
        </authorList>
    </citation>
    <scope>NUCLEOTIDE SEQUENCE [LARGE SCALE GENOMIC DNA]</scope>
    <source>
        <strain>1021</strain>
    </source>
</reference>
<reference key="2">
    <citation type="journal article" date="2001" name="Science">
        <title>The composite genome of the legume symbiont Sinorhizobium meliloti.</title>
        <authorList>
            <person name="Galibert F."/>
            <person name="Finan T.M."/>
            <person name="Long S.R."/>
            <person name="Puehler A."/>
            <person name="Abola P."/>
            <person name="Ampe F."/>
            <person name="Barloy-Hubler F."/>
            <person name="Barnett M.J."/>
            <person name="Becker A."/>
            <person name="Boistard P."/>
            <person name="Bothe G."/>
            <person name="Boutry M."/>
            <person name="Bowser L."/>
            <person name="Buhrmester J."/>
            <person name="Cadieu E."/>
            <person name="Capela D."/>
            <person name="Chain P."/>
            <person name="Cowie A."/>
            <person name="Davis R.W."/>
            <person name="Dreano S."/>
            <person name="Federspiel N.A."/>
            <person name="Fisher R.F."/>
            <person name="Gloux S."/>
            <person name="Godrie T."/>
            <person name="Goffeau A."/>
            <person name="Golding B."/>
            <person name="Gouzy J."/>
            <person name="Gurjal M."/>
            <person name="Hernandez-Lucas I."/>
            <person name="Hong A."/>
            <person name="Huizar L."/>
            <person name="Hyman R.W."/>
            <person name="Jones T."/>
            <person name="Kahn D."/>
            <person name="Kahn M.L."/>
            <person name="Kalman S."/>
            <person name="Keating D.H."/>
            <person name="Kiss E."/>
            <person name="Komp C."/>
            <person name="Lelaure V."/>
            <person name="Masuy D."/>
            <person name="Palm C."/>
            <person name="Peck M.C."/>
            <person name="Pohl T.M."/>
            <person name="Portetelle D."/>
            <person name="Purnelle B."/>
            <person name="Ramsperger U."/>
            <person name="Surzycki R."/>
            <person name="Thebault P."/>
            <person name="Vandenbol M."/>
            <person name="Vorhoelter F.J."/>
            <person name="Weidner S."/>
            <person name="Wells D.H."/>
            <person name="Wong K."/>
            <person name="Yeh K.-C."/>
            <person name="Batut J."/>
        </authorList>
    </citation>
    <scope>NUCLEOTIDE SEQUENCE [LARGE SCALE GENOMIC DNA]</scope>
    <source>
        <strain>1021</strain>
    </source>
</reference>